<comment type="function">
    <text evidence="4 5 10 12 13">Corepressor targeting diverse transcription regulators such as GLIS2 or BCL6. Has dehydrogenase activity. Involved in controlling the equilibrium between tubular and stacked structures in the Golgi complex. Functions in brown adipose tissue (BAT) differentiation.</text>
</comment>
<comment type="cofactor">
    <cofactor evidence="1">
        <name>NAD(+)</name>
        <dbReference type="ChEBI" id="CHEBI:57540"/>
    </cofactor>
    <text evidence="1">Cofactor binding induces a conformational change.</text>
</comment>
<comment type="subunit">
    <text evidence="2 6 7 8 9 10 11 12 13 14">Homo- or heterodimer. Heterodimer with CTBP2. Interacts with ELK3 (via its PXDLS motif). Interacts with RBBP8 (via its PXDLS motif). Interacts with PNN, MECOM and ZFHX1B. Interacts with ZNF366 (via PXDLS motif) (By similarity). Interaction with SATB1 (non-acetylated form); the interaction stabilizes its attachment to DNA and promotes transcription repression. Interacts with PRDM16; the interaction represses white adipose tissue (WAT)-specific genes expression. Interacts with GLIS2, HIPK2, FOXP1, FOXP2, HDAC4, HDAC5, HDAC9, NRIP1, WIZ and ZNF217. Interacts with BCL6; the interaction is required for BCL6 transcriptional autoinhibition and inhibition of some BCL6 target genes. Interacts with IKZF4. Interacts with MCRIP1 (unphosphorylated form, via the PXDLS motif); competitively inhibiting CTBP-ZEB1 interaction (By similarity). Interacts with Bassoon/BSN; this interaction targets and anchors CTBP1 to presynapses (By similarity). Interacts with SIMC1 (By similarity).</text>
</comment>
<comment type="interaction">
    <interactant intactId="EBI-604547">
        <id>O88712</id>
    </interactant>
    <interactant intactId="EBI-8560245">
        <id>Q64318</id>
        <label>Zeb1</label>
    </interactant>
    <organismsDiffer>false</organismsDiffer>
    <experiments>5</experiments>
</comment>
<comment type="interaction">
    <interactant intactId="EBI-604547">
        <id>O88712</id>
    </interactant>
    <interactant intactId="EBI-2507362">
        <id>Q14526</id>
        <label>HIC1</label>
    </interactant>
    <organismsDiffer>true</organismsDiffer>
    <experiments>10</experiments>
</comment>
<comment type="subcellular location">
    <subcellularLocation>
        <location evidence="2">Cytoplasm</location>
    </subcellularLocation>
    <subcellularLocation>
        <location evidence="2">Nucleus</location>
    </subcellularLocation>
</comment>
<comment type="alternative products">
    <event type="alternative splicing"/>
    <isoform>
        <id>O88712-1</id>
        <name>1</name>
        <sequence type="displayed"/>
    </isoform>
    <isoform>
        <id>O88712-2</id>
        <name>2</name>
        <sequence type="described" ref="VSP_024738"/>
    </isoform>
    <isoform>
        <id>O88712-3</id>
        <name>3</name>
        <sequence type="described" ref="VSP_024737"/>
    </isoform>
</comment>
<comment type="tissue specificity">
    <text evidence="5">Expressed in a wide range of adult tissues.</text>
</comment>
<comment type="developmental stage">
    <text evidence="5">Expressed throughout the developmental stages.</text>
</comment>
<comment type="PTM">
    <text evidence="1">ADP-ribosylated; when cells are exposed to brefeldin A.</text>
</comment>
<comment type="PTM">
    <text evidence="1">The level of phosphorylation appears to be regulated during the cell cycle. Phosphorylation by HIPK2 on Ser-423 induces proteasomal degradation (By similarity).</text>
</comment>
<comment type="PTM">
    <text evidence="1">Sumoylation on Lys-429 is promoted by the E3 SUMO-protein ligase CBX4.</text>
</comment>
<comment type="similarity">
    <text evidence="17">Belongs to the D-isomer specific 2-hydroxyacid dehydrogenase family.</text>
</comment>
<comment type="sequence caution" evidence="17">
    <conflict type="erroneous initiation">
        <sequence resource="EMBL-CDS" id="BAE41586"/>
    </conflict>
    <text>Truncated N-terminus.</text>
</comment>
<keyword id="KW-0013">ADP-ribosylation</keyword>
<keyword id="KW-0025">Alternative splicing</keyword>
<keyword id="KW-0963">Cytoplasm</keyword>
<keyword id="KW-0221">Differentiation</keyword>
<keyword id="KW-0903">Direct protein sequencing</keyword>
<keyword id="KW-1017">Isopeptide bond</keyword>
<keyword id="KW-0520">NAD</keyword>
<keyword id="KW-0539">Nucleus</keyword>
<keyword id="KW-0560">Oxidoreductase</keyword>
<keyword id="KW-0597">Phosphoprotein</keyword>
<keyword id="KW-1185">Reference proteome</keyword>
<keyword id="KW-0678">Repressor</keyword>
<keyword id="KW-0804">Transcription</keyword>
<keyword id="KW-0805">Transcription regulation</keyword>
<keyword id="KW-0832">Ubl conjugation</keyword>
<sequence>MGSSHLLNKGLPLGVRPPIMNGPMHPRPLVALLDGRDCTVEMPILKDVATVAFCDAQSTQEIHEKVLNEAVGALMYHTITLTREDLEKFKALRIIVRIGSGFDNIDIKSAGDLGIAVCNVPAASVEETADSTLCHILNLYRRTTWLHQALREGTRVQSVEQIREVASGAARIRGETLGIIGLGRVGQAVALRAKAFGFNVLFYDPYLSDGIERALGLQRVSTLQDLLFHSDCVTLHCGLNEHNHHLINDFTVKQMRQGAFLVNTARGGLVDEKALAQALKEGRIRGAALDVHESEPFSFSQGPLKDAPNLICTPHAAWYSEQASIEMREEAAREIRRAITGRIPDSLKNCVNKDHLTAATHWASMDPAVVHPELNGAAYSRYPPGVVSVAPTGIPAAVEGIVPSAMSLSHGLPPVAHPPHAPSPGQTVKPEADRDHTSDQL</sequence>
<gene>
    <name type="primary">Ctbp1</name>
</gene>
<feature type="chain" id="PRO_0000076042" description="C-terminal-binding protein 1">
    <location>
        <begin position="1"/>
        <end position="441"/>
    </location>
</feature>
<feature type="region of interest" description="Interaction with GLIS2 1">
    <location>
        <begin position="1"/>
        <end position="70"/>
    </location>
</feature>
<feature type="region of interest" description="Interaction with GLIS2 2">
    <location>
        <begin position="288"/>
        <end position="360"/>
    </location>
</feature>
<feature type="region of interest" description="Disordered" evidence="3">
    <location>
        <begin position="409"/>
        <end position="441"/>
    </location>
</feature>
<feature type="compositionally biased region" description="Basic and acidic residues" evidence="3">
    <location>
        <begin position="430"/>
        <end position="441"/>
    </location>
</feature>
<feature type="active site" evidence="1">
    <location>
        <position position="266"/>
    </location>
</feature>
<feature type="active site" evidence="1">
    <location>
        <position position="295"/>
    </location>
</feature>
<feature type="active site" description="Proton donor" evidence="1">
    <location>
        <position position="315"/>
    </location>
</feature>
<feature type="binding site" evidence="1">
    <location>
        <position position="100"/>
    </location>
    <ligand>
        <name>NAD(+)</name>
        <dbReference type="ChEBI" id="CHEBI:57540"/>
    </ligand>
</feature>
<feature type="binding site" evidence="1">
    <location>
        <begin position="180"/>
        <end position="185"/>
    </location>
    <ligand>
        <name>NAD(+)</name>
        <dbReference type="ChEBI" id="CHEBI:57540"/>
    </ligand>
</feature>
<feature type="binding site" evidence="1">
    <location>
        <position position="204"/>
    </location>
    <ligand>
        <name>NAD(+)</name>
        <dbReference type="ChEBI" id="CHEBI:57540"/>
    </ligand>
</feature>
<feature type="binding site" evidence="1">
    <location>
        <begin position="237"/>
        <end position="243"/>
    </location>
    <ligand>
        <name>NAD(+)</name>
        <dbReference type="ChEBI" id="CHEBI:57540"/>
    </ligand>
</feature>
<feature type="binding site" evidence="1">
    <location>
        <begin position="264"/>
        <end position="266"/>
    </location>
    <ligand>
        <name>NAD(+)</name>
        <dbReference type="ChEBI" id="CHEBI:57540"/>
    </ligand>
</feature>
<feature type="binding site" evidence="1">
    <location>
        <position position="290"/>
    </location>
    <ligand>
        <name>NAD(+)</name>
        <dbReference type="ChEBI" id="CHEBI:57540"/>
    </ligand>
</feature>
<feature type="binding site" evidence="1">
    <location>
        <begin position="315"/>
        <end position="318"/>
    </location>
    <ligand>
        <name>NAD(+)</name>
        <dbReference type="ChEBI" id="CHEBI:57540"/>
    </ligand>
</feature>
<feature type="site" description="Cleavage; by CAPN1" evidence="2">
    <location>
        <begin position="375"/>
        <end position="376"/>
    </location>
</feature>
<feature type="site" description="Cleavage; by CAPN1" evidence="2">
    <location>
        <begin position="388"/>
        <end position="389"/>
    </location>
</feature>
<feature type="site" description="Cleavage; by CAPN1 and CAPN3" evidence="2">
    <location>
        <begin position="410"/>
        <end position="411"/>
    </location>
</feature>
<feature type="modified residue" description="Phosphoserine" evidence="2">
    <location>
        <position position="300"/>
    </location>
</feature>
<feature type="modified residue" description="Phosphoserine" evidence="2">
    <location>
        <position position="423"/>
    </location>
</feature>
<feature type="cross-link" description="Glycyl lysine isopeptide (Lys-Gly) (interchain with G-Cter in SUMO)" evidence="1">
    <location>
        <position position="429"/>
    </location>
</feature>
<feature type="splice variant" id="VSP_024737" description="In isoform 3." evidence="16">
    <location>
        <begin position="1"/>
        <end position="74"/>
    </location>
</feature>
<feature type="splice variant" id="VSP_024738" description="In isoform 2." evidence="15 16">
    <original>MGSSHLLNKGLPL</original>
    <variation>MS</variation>
    <location>
        <begin position="1"/>
        <end position="13"/>
    </location>
</feature>
<feature type="sequence conflict" description="In Ref. 3; BAE41586/BAE42587." evidence="17" ref="3">
    <original>D</original>
    <variation>G</variation>
    <location>
        <position position="55"/>
    </location>
</feature>
<feature type="sequence conflict" description="In Ref. 3; BAE35946." evidence="17" ref="3">
    <original>K</original>
    <variation>R</variation>
    <location>
        <position position="108"/>
    </location>
</feature>
<feature type="sequence conflict" description="In Ref. 1; CAA09219 and 3; BAE35946." evidence="17" ref="1 3">
    <location>
        <position position="380"/>
    </location>
</feature>
<name>CTBP1_MOUSE</name>
<accession>O88712</accession>
<accession>Q3TAT1</accession>
<accession>Q3TDL5</accession>
<accession>Q3TUM5</accession>
<accession>Q91WI6</accession>
<accession>Q91YX3</accession>
<accession>Q9QYG2</accession>
<organism>
    <name type="scientific">Mus musculus</name>
    <name type="common">Mouse</name>
    <dbReference type="NCBI Taxonomy" id="10090"/>
    <lineage>
        <taxon>Eukaryota</taxon>
        <taxon>Metazoa</taxon>
        <taxon>Chordata</taxon>
        <taxon>Craniata</taxon>
        <taxon>Vertebrata</taxon>
        <taxon>Euteleostomi</taxon>
        <taxon>Mammalia</taxon>
        <taxon>Eutheria</taxon>
        <taxon>Euarchontoglires</taxon>
        <taxon>Glires</taxon>
        <taxon>Rodentia</taxon>
        <taxon>Myomorpha</taxon>
        <taxon>Muroidea</taxon>
        <taxon>Muridae</taxon>
        <taxon>Murinae</taxon>
        <taxon>Mus</taxon>
        <taxon>Mus</taxon>
    </lineage>
</organism>
<protein>
    <recommendedName>
        <fullName>C-terminal-binding protein 1</fullName>
        <shortName>CtBP1</shortName>
        <ecNumber>1.1.1.-</ecNumber>
    </recommendedName>
</protein>
<evidence type="ECO:0000250" key="1"/>
<evidence type="ECO:0000250" key="2">
    <source>
        <dbReference type="UniProtKB" id="Q13363"/>
    </source>
</evidence>
<evidence type="ECO:0000256" key="3">
    <source>
        <dbReference type="SAM" id="MobiDB-lite"/>
    </source>
</evidence>
<evidence type="ECO:0000269" key="4">
    <source>
    </source>
</evidence>
<evidence type="ECO:0000269" key="5">
    <source>
    </source>
</evidence>
<evidence type="ECO:0000269" key="6">
    <source>
    </source>
</evidence>
<evidence type="ECO:0000269" key="7">
    <source>
    </source>
</evidence>
<evidence type="ECO:0000269" key="8">
    <source>
    </source>
</evidence>
<evidence type="ECO:0000269" key="9">
    <source>
    </source>
</evidence>
<evidence type="ECO:0000269" key="10">
    <source>
    </source>
</evidence>
<evidence type="ECO:0000269" key="11">
    <source>
    </source>
</evidence>
<evidence type="ECO:0000269" key="12">
    <source>
    </source>
</evidence>
<evidence type="ECO:0000269" key="13">
    <source>
    </source>
</evidence>
<evidence type="ECO:0000269" key="14">
    <source>
    </source>
</evidence>
<evidence type="ECO:0000303" key="15">
    <source>
    </source>
</evidence>
<evidence type="ECO:0000303" key="16">
    <source>
    </source>
</evidence>
<evidence type="ECO:0000305" key="17"/>
<proteinExistence type="evidence at protein level"/>
<dbReference type="EC" id="1.1.1.-"/>
<dbReference type="EMBL" id="AJ010483">
    <property type="protein sequence ID" value="CAA09219.1"/>
    <property type="molecule type" value="mRNA"/>
</dbReference>
<dbReference type="EMBL" id="AB033122">
    <property type="protein sequence ID" value="BAA85180.1"/>
    <property type="molecule type" value="mRNA"/>
</dbReference>
<dbReference type="EMBL" id="AK133816">
    <property type="protein sequence ID" value="BAE21859.1"/>
    <property type="molecule type" value="mRNA"/>
</dbReference>
<dbReference type="EMBL" id="AK160658">
    <property type="protein sequence ID" value="BAE35946.1"/>
    <property type="molecule type" value="mRNA"/>
</dbReference>
<dbReference type="EMBL" id="AK165276">
    <property type="protein sequence ID" value="BAE38115.1"/>
    <property type="molecule type" value="mRNA"/>
</dbReference>
<dbReference type="EMBL" id="AK170133">
    <property type="protein sequence ID" value="BAE41586.1"/>
    <property type="status" value="ALT_INIT"/>
    <property type="molecule type" value="mRNA"/>
</dbReference>
<dbReference type="EMBL" id="AK171650">
    <property type="protein sequence ID" value="BAE42587.1"/>
    <property type="molecule type" value="mRNA"/>
</dbReference>
<dbReference type="EMBL" id="BC013702">
    <property type="protein sequence ID" value="AAH13702.1"/>
    <property type="molecule type" value="mRNA"/>
</dbReference>
<dbReference type="EMBL" id="BC015071">
    <property type="protein sequence ID" value="AAH15071.1"/>
    <property type="molecule type" value="mRNA"/>
</dbReference>
<dbReference type="EMBL" id="BC042425">
    <property type="protein sequence ID" value="AAH42425.1"/>
    <property type="molecule type" value="mRNA"/>
</dbReference>
<dbReference type="CCDS" id="CCDS19201.1">
    <molecule id="O88712-1"/>
</dbReference>
<dbReference type="CCDS" id="CCDS80255.1">
    <molecule id="O88712-3"/>
</dbReference>
<dbReference type="RefSeq" id="NP_001185788.1">
    <property type="nucleotide sequence ID" value="NM_001198859.1"/>
</dbReference>
<dbReference type="RefSeq" id="NP_001185789.1">
    <property type="nucleotide sequence ID" value="NM_001198860.1"/>
</dbReference>
<dbReference type="RefSeq" id="NP_001185790.1">
    <molecule id="O88712-2"/>
    <property type="nucleotide sequence ID" value="NM_001198861.1"/>
</dbReference>
<dbReference type="RefSeq" id="NP_001297464.1">
    <molecule id="O88712-3"/>
    <property type="nucleotide sequence ID" value="NM_001310535.1"/>
</dbReference>
<dbReference type="RefSeq" id="NP_038530.1">
    <molecule id="O88712-1"/>
    <property type="nucleotide sequence ID" value="NM_013502.3"/>
</dbReference>
<dbReference type="SMR" id="O88712"/>
<dbReference type="BioGRID" id="198961">
    <property type="interactions" value="42"/>
</dbReference>
<dbReference type="CORUM" id="O88712"/>
<dbReference type="DIP" id="DIP-33907N"/>
<dbReference type="FunCoup" id="O88712">
    <property type="interactions" value="2285"/>
</dbReference>
<dbReference type="IntAct" id="O88712">
    <property type="interactions" value="19"/>
</dbReference>
<dbReference type="MINT" id="O88712"/>
<dbReference type="STRING" id="10090.ENSMUSP00000078682"/>
<dbReference type="GlyGen" id="O88712">
    <property type="glycosylation" value="4 sites, 1 O-linked glycan (4 sites)"/>
</dbReference>
<dbReference type="iPTMnet" id="O88712"/>
<dbReference type="PhosphoSitePlus" id="O88712"/>
<dbReference type="SwissPalm" id="O88712"/>
<dbReference type="jPOST" id="O88712"/>
<dbReference type="PaxDb" id="10090-ENSMUSP00000078682"/>
<dbReference type="PeptideAtlas" id="O88712"/>
<dbReference type="ProteomicsDB" id="283973">
    <molecule id="O88712-1"/>
</dbReference>
<dbReference type="ProteomicsDB" id="283974">
    <molecule id="O88712-2"/>
</dbReference>
<dbReference type="ProteomicsDB" id="283975">
    <molecule id="O88712-3"/>
</dbReference>
<dbReference type="Pumba" id="O88712"/>
<dbReference type="Antibodypedia" id="3783">
    <property type="antibodies" value="683 antibodies from 44 providers"/>
</dbReference>
<dbReference type="DNASU" id="13016"/>
<dbReference type="Ensembl" id="ENSMUST00000079746.10">
    <molecule id="O88712-1"/>
    <property type="protein sequence ID" value="ENSMUSP00000078682.7"/>
    <property type="gene ID" value="ENSMUSG00000037373.13"/>
</dbReference>
<dbReference type="Ensembl" id="ENSMUST00000201575.4">
    <molecule id="O88712-3"/>
    <property type="protein sequence ID" value="ENSMUSP00000144554.2"/>
    <property type="gene ID" value="ENSMUSG00000037373.13"/>
</dbReference>
<dbReference type="GeneID" id="13016"/>
<dbReference type="KEGG" id="mmu:13016"/>
<dbReference type="UCSC" id="uc008xaj.2">
    <molecule id="O88712-1"/>
    <property type="organism name" value="mouse"/>
</dbReference>
<dbReference type="UCSC" id="uc008xak.2">
    <molecule id="O88712-2"/>
    <property type="organism name" value="mouse"/>
</dbReference>
<dbReference type="AGR" id="MGI:1201685"/>
<dbReference type="CTD" id="1487"/>
<dbReference type="MGI" id="MGI:1201685">
    <property type="gene designation" value="Ctbp1"/>
</dbReference>
<dbReference type="VEuPathDB" id="HostDB:ENSMUSG00000037373"/>
<dbReference type="eggNOG" id="KOG0067">
    <property type="taxonomic scope" value="Eukaryota"/>
</dbReference>
<dbReference type="GeneTree" id="ENSGT00940000157061"/>
<dbReference type="InParanoid" id="O88712"/>
<dbReference type="OrthoDB" id="9991913at2759"/>
<dbReference type="PhylomeDB" id="O88712"/>
<dbReference type="TreeFam" id="TF313593"/>
<dbReference type="Reactome" id="R-MMU-3769402">
    <property type="pathway name" value="Deactivation of the beta-catenin transactivating complex"/>
</dbReference>
<dbReference type="Reactome" id="R-MMU-3899300">
    <property type="pathway name" value="SUMOylation of transcription cofactors"/>
</dbReference>
<dbReference type="Reactome" id="R-MMU-4641265">
    <property type="pathway name" value="Repression of WNT target genes"/>
</dbReference>
<dbReference type="BioGRID-ORCS" id="13016">
    <property type="hits" value="3 hits in 79 CRISPR screens"/>
</dbReference>
<dbReference type="CD-CODE" id="CE726F99">
    <property type="entry name" value="Postsynaptic density"/>
</dbReference>
<dbReference type="ChiTaRS" id="Ctbp1">
    <property type="organism name" value="mouse"/>
</dbReference>
<dbReference type="PRO" id="PR:O88712"/>
<dbReference type="Proteomes" id="UP000000589">
    <property type="component" value="Chromosome 5"/>
</dbReference>
<dbReference type="RNAct" id="O88712">
    <property type="molecule type" value="protein"/>
</dbReference>
<dbReference type="Bgee" id="ENSMUSG00000037373">
    <property type="expression patterns" value="Expressed in metanephric loop of Henle and 268 other cell types or tissues"/>
</dbReference>
<dbReference type="ExpressionAtlas" id="O88712">
    <property type="expression patterns" value="baseline and differential"/>
</dbReference>
<dbReference type="GO" id="GO:0098982">
    <property type="term" value="C:GABA-ergic synapse"/>
    <property type="evidence" value="ECO:0000314"/>
    <property type="project" value="SynGO"/>
</dbReference>
<dbReference type="GO" id="GO:0098978">
    <property type="term" value="C:glutamatergic synapse"/>
    <property type="evidence" value="ECO:0000314"/>
    <property type="project" value="SynGO"/>
</dbReference>
<dbReference type="GO" id="GO:0005654">
    <property type="term" value="C:nucleoplasm"/>
    <property type="evidence" value="ECO:0007669"/>
    <property type="project" value="Ensembl"/>
</dbReference>
<dbReference type="GO" id="GO:0005634">
    <property type="term" value="C:nucleus"/>
    <property type="evidence" value="ECO:0000314"/>
    <property type="project" value="UniProtKB"/>
</dbReference>
<dbReference type="GO" id="GO:0098831">
    <property type="term" value="C:presynaptic active zone cytoplasmic component"/>
    <property type="evidence" value="ECO:0000314"/>
    <property type="project" value="SynGO"/>
</dbReference>
<dbReference type="GO" id="GO:0017053">
    <property type="term" value="C:transcription repressor complex"/>
    <property type="evidence" value="ECO:0000314"/>
    <property type="project" value="UniProtKB"/>
</dbReference>
<dbReference type="GO" id="GO:0003682">
    <property type="term" value="F:chromatin binding"/>
    <property type="evidence" value="ECO:0000314"/>
    <property type="project" value="MGI"/>
</dbReference>
<dbReference type="GO" id="GO:0042802">
    <property type="term" value="F:identical protein binding"/>
    <property type="evidence" value="ECO:0007669"/>
    <property type="project" value="Ensembl"/>
</dbReference>
<dbReference type="GO" id="GO:0106222">
    <property type="term" value="F:lncRNA binding"/>
    <property type="evidence" value="ECO:0000314"/>
    <property type="project" value="MGI"/>
</dbReference>
<dbReference type="GO" id="GO:0051287">
    <property type="term" value="F:NAD binding"/>
    <property type="evidence" value="ECO:0000250"/>
    <property type="project" value="UniProtKB"/>
</dbReference>
<dbReference type="GO" id="GO:0016616">
    <property type="term" value="F:oxidoreductase activity, acting on the CH-OH group of donors, NAD or NADP as acceptor"/>
    <property type="evidence" value="ECO:0000250"/>
    <property type="project" value="UniProtKB"/>
</dbReference>
<dbReference type="GO" id="GO:0019904">
    <property type="term" value="F:protein domain specific binding"/>
    <property type="evidence" value="ECO:0007669"/>
    <property type="project" value="Ensembl"/>
</dbReference>
<dbReference type="GO" id="GO:0061629">
    <property type="term" value="F:RNA polymerase II-specific DNA-binding transcription factor binding"/>
    <property type="evidence" value="ECO:0000353"/>
    <property type="project" value="UniProtKB"/>
</dbReference>
<dbReference type="GO" id="GO:0003714">
    <property type="term" value="F:transcription corepressor activity"/>
    <property type="evidence" value="ECO:0007669"/>
    <property type="project" value="Ensembl"/>
</dbReference>
<dbReference type="GO" id="GO:0001222">
    <property type="term" value="F:transcription corepressor binding"/>
    <property type="evidence" value="ECO:0007669"/>
    <property type="project" value="Ensembl"/>
</dbReference>
<dbReference type="GO" id="GO:0045892">
    <property type="term" value="P:negative regulation of DNA-templated transcription"/>
    <property type="evidence" value="ECO:0000314"/>
    <property type="project" value="UniProtKB"/>
</dbReference>
<dbReference type="GO" id="GO:0000122">
    <property type="term" value="P:negative regulation of transcription by RNA polymerase II"/>
    <property type="evidence" value="ECO:0000315"/>
    <property type="project" value="MGI"/>
</dbReference>
<dbReference type="GO" id="GO:0007219">
    <property type="term" value="P:Notch signaling pathway"/>
    <property type="evidence" value="ECO:0000315"/>
    <property type="project" value="MGI"/>
</dbReference>
<dbReference type="GO" id="GO:0051726">
    <property type="term" value="P:regulation of cell cycle"/>
    <property type="evidence" value="ECO:0007669"/>
    <property type="project" value="Ensembl"/>
</dbReference>
<dbReference type="GO" id="GO:0097091">
    <property type="term" value="P:synaptic vesicle clustering"/>
    <property type="evidence" value="ECO:0000314"/>
    <property type="project" value="SynGO"/>
</dbReference>
<dbReference type="GO" id="GO:0048488">
    <property type="term" value="P:synaptic vesicle endocytosis"/>
    <property type="evidence" value="ECO:0000314"/>
    <property type="project" value="SynGO"/>
</dbReference>
<dbReference type="GO" id="GO:0050872">
    <property type="term" value="P:white fat cell differentiation"/>
    <property type="evidence" value="ECO:0000314"/>
    <property type="project" value="UniProtKB"/>
</dbReference>
<dbReference type="CDD" id="cd05299">
    <property type="entry name" value="CtBP_dh"/>
    <property type="match status" value="1"/>
</dbReference>
<dbReference type="FunFam" id="3.40.50.720:FF:000012">
    <property type="entry name" value="C-terminal-binding protein 2 isoform 1"/>
    <property type="match status" value="1"/>
</dbReference>
<dbReference type="Gene3D" id="3.40.50.720">
    <property type="entry name" value="NAD(P)-binding Rossmann-like Domain"/>
    <property type="match status" value="2"/>
</dbReference>
<dbReference type="InterPro" id="IPR043322">
    <property type="entry name" value="CtBP"/>
</dbReference>
<dbReference type="InterPro" id="IPR051638">
    <property type="entry name" value="CTBP_dehydrogenase"/>
</dbReference>
<dbReference type="InterPro" id="IPR006139">
    <property type="entry name" value="D-isomer_2_OHA_DH_cat_dom"/>
</dbReference>
<dbReference type="InterPro" id="IPR029753">
    <property type="entry name" value="D-isomer_DH_CS"/>
</dbReference>
<dbReference type="InterPro" id="IPR029752">
    <property type="entry name" value="D-isomer_DH_CS1"/>
</dbReference>
<dbReference type="InterPro" id="IPR006140">
    <property type="entry name" value="D-isomer_DH_NAD-bd"/>
</dbReference>
<dbReference type="InterPro" id="IPR036291">
    <property type="entry name" value="NAD(P)-bd_dom_sf"/>
</dbReference>
<dbReference type="PANTHER" id="PTHR46029">
    <property type="entry name" value="C-TERMINAL-BINDING PROTEIN"/>
    <property type="match status" value="1"/>
</dbReference>
<dbReference type="PANTHER" id="PTHR46029:SF2">
    <property type="entry name" value="C-TERMINAL-BINDING PROTEIN 1"/>
    <property type="match status" value="1"/>
</dbReference>
<dbReference type="Pfam" id="PF00389">
    <property type="entry name" value="2-Hacid_dh"/>
    <property type="match status" value="1"/>
</dbReference>
<dbReference type="Pfam" id="PF02826">
    <property type="entry name" value="2-Hacid_dh_C"/>
    <property type="match status" value="1"/>
</dbReference>
<dbReference type="SUPFAM" id="SSF52283">
    <property type="entry name" value="Formate/glycerate dehydrogenase catalytic domain-like"/>
    <property type="match status" value="1"/>
</dbReference>
<dbReference type="SUPFAM" id="SSF51735">
    <property type="entry name" value="NAD(P)-binding Rossmann-fold domains"/>
    <property type="match status" value="1"/>
</dbReference>
<dbReference type="PROSITE" id="PS00065">
    <property type="entry name" value="D_2_HYDROXYACID_DH_1"/>
    <property type="match status" value="1"/>
</dbReference>
<dbReference type="PROSITE" id="PS00671">
    <property type="entry name" value="D_2_HYDROXYACID_DH_3"/>
    <property type="match status" value="1"/>
</dbReference>
<reference key="1">
    <citation type="journal article" date="1999" name="EMBO J.">
        <title>Net, a negative Ras-switchable TCF, contains a second inhibition domain, the CID, that mediates repression through interactions with CtBP and de-acetylation.</title>
        <authorList>
            <person name="Criqui-Filipe P."/>
            <person name="Ducret C."/>
            <person name="Maira S.-M."/>
            <person name="Wasylyk B."/>
        </authorList>
    </citation>
    <scope>NUCLEOTIDE SEQUENCE [MRNA] (ISOFORM 1)</scope>
    <scope>FUNCTION</scope>
    <scope>SUBCELLULAR LOCATION</scope>
</reference>
<reference key="2">
    <citation type="journal article" date="1999" name="Mol. Cell. Biol.">
        <title>Identification of CtBP1 and CtBP2 as corepressors of zinc finger-homeodomain factor deltaEF1.</title>
        <authorList>
            <person name="Furusawa T."/>
            <person name="Moribe H."/>
            <person name="Kondoh H."/>
            <person name="Higashi Y."/>
        </authorList>
    </citation>
    <scope>NUCLEOTIDE SEQUENCE [MRNA] (ISOFORM 1)</scope>
    <scope>FUNCTION</scope>
    <scope>TISSUE SPECIFICITY</scope>
    <scope>DEVELOPMENTAL STAGE</scope>
    <source>
        <strain>ICR</strain>
    </source>
</reference>
<reference key="3">
    <citation type="journal article" date="2005" name="Science">
        <title>The transcriptional landscape of the mammalian genome.</title>
        <authorList>
            <person name="Carninci P."/>
            <person name="Kasukawa T."/>
            <person name="Katayama S."/>
            <person name="Gough J."/>
            <person name="Frith M.C."/>
            <person name="Maeda N."/>
            <person name="Oyama R."/>
            <person name="Ravasi T."/>
            <person name="Lenhard B."/>
            <person name="Wells C."/>
            <person name="Kodzius R."/>
            <person name="Shimokawa K."/>
            <person name="Bajic V.B."/>
            <person name="Brenner S.E."/>
            <person name="Batalov S."/>
            <person name="Forrest A.R."/>
            <person name="Zavolan M."/>
            <person name="Davis M.J."/>
            <person name="Wilming L.G."/>
            <person name="Aidinis V."/>
            <person name="Allen J.E."/>
            <person name="Ambesi-Impiombato A."/>
            <person name="Apweiler R."/>
            <person name="Aturaliya R.N."/>
            <person name="Bailey T.L."/>
            <person name="Bansal M."/>
            <person name="Baxter L."/>
            <person name="Beisel K.W."/>
            <person name="Bersano T."/>
            <person name="Bono H."/>
            <person name="Chalk A.M."/>
            <person name="Chiu K.P."/>
            <person name="Choudhary V."/>
            <person name="Christoffels A."/>
            <person name="Clutterbuck D.R."/>
            <person name="Crowe M.L."/>
            <person name="Dalla E."/>
            <person name="Dalrymple B.P."/>
            <person name="de Bono B."/>
            <person name="Della Gatta G."/>
            <person name="di Bernardo D."/>
            <person name="Down T."/>
            <person name="Engstrom P."/>
            <person name="Fagiolini M."/>
            <person name="Faulkner G."/>
            <person name="Fletcher C.F."/>
            <person name="Fukushima T."/>
            <person name="Furuno M."/>
            <person name="Futaki S."/>
            <person name="Gariboldi M."/>
            <person name="Georgii-Hemming P."/>
            <person name="Gingeras T.R."/>
            <person name="Gojobori T."/>
            <person name="Green R.E."/>
            <person name="Gustincich S."/>
            <person name="Harbers M."/>
            <person name="Hayashi Y."/>
            <person name="Hensch T.K."/>
            <person name="Hirokawa N."/>
            <person name="Hill D."/>
            <person name="Huminiecki L."/>
            <person name="Iacono M."/>
            <person name="Ikeo K."/>
            <person name="Iwama A."/>
            <person name="Ishikawa T."/>
            <person name="Jakt M."/>
            <person name="Kanapin A."/>
            <person name="Katoh M."/>
            <person name="Kawasawa Y."/>
            <person name="Kelso J."/>
            <person name="Kitamura H."/>
            <person name="Kitano H."/>
            <person name="Kollias G."/>
            <person name="Krishnan S.P."/>
            <person name="Kruger A."/>
            <person name="Kummerfeld S.K."/>
            <person name="Kurochkin I.V."/>
            <person name="Lareau L.F."/>
            <person name="Lazarevic D."/>
            <person name="Lipovich L."/>
            <person name="Liu J."/>
            <person name="Liuni S."/>
            <person name="McWilliam S."/>
            <person name="Madan Babu M."/>
            <person name="Madera M."/>
            <person name="Marchionni L."/>
            <person name="Matsuda H."/>
            <person name="Matsuzawa S."/>
            <person name="Miki H."/>
            <person name="Mignone F."/>
            <person name="Miyake S."/>
            <person name="Morris K."/>
            <person name="Mottagui-Tabar S."/>
            <person name="Mulder N."/>
            <person name="Nakano N."/>
            <person name="Nakauchi H."/>
            <person name="Ng P."/>
            <person name="Nilsson R."/>
            <person name="Nishiguchi S."/>
            <person name="Nishikawa S."/>
            <person name="Nori F."/>
            <person name="Ohara O."/>
            <person name="Okazaki Y."/>
            <person name="Orlando V."/>
            <person name="Pang K.C."/>
            <person name="Pavan W.J."/>
            <person name="Pavesi G."/>
            <person name="Pesole G."/>
            <person name="Petrovsky N."/>
            <person name="Piazza S."/>
            <person name="Reed J."/>
            <person name="Reid J.F."/>
            <person name="Ring B.Z."/>
            <person name="Ringwald M."/>
            <person name="Rost B."/>
            <person name="Ruan Y."/>
            <person name="Salzberg S.L."/>
            <person name="Sandelin A."/>
            <person name="Schneider C."/>
            <person name="Schoenbach C."/>
            <person name="Sekiguchi K."/>
            <person name="Semple C.A."/>
            <person name="Seno S."/>
            <person name="Sessa L."/>
            <person name="Sheng Y."/>
            <person name="Shibata Y."/>
            <person name="Shimada H."/>
            <person name="Shimada K."/>
            <person name="Silva D."/>
            <person name="Sinclair B."/>
            <person name="Sperling S."/>
            <person name="Stupka E."/>
            <person name="Sugiura K."/>
            <person name="Sultana R."/>
            <person name="Takenaka Y."/>
            <person name="Taki K."/>
            <person name="Tammoja K."/>
            <person name="Tan S.L."/>
            <person name="Tang S."/>
            <person name="Taylor M.S."/>
            <person name="Tegner J."/>
            <person name="Teichmann S.A."/>
            <person name="Ueda H.R."/>
            <person name="van Nimwegen E."/>
            <person name="Verardo R."/>
            <person name="Wei C.L."/>
            <person name="Yagi K."/>
            <person name="Yamanishi H."/>
            <person name="Zabarovsky E."/>
            <person name="Zhu S."/>
            <person name="Zimmer A."/>
            <person name="Hide W."/>
            <person name="Bult C."/>
            <person name="Grimmond S.M."/>
            <person name="Teasdale R.D."/>
            <person name="Liu E.T."/>
            <person name="Brusic V."/>
            <person name="Quackenbush J."/>
            <person name="Wahlestedt C."/>
            <person name="Mattick J.S."/>
            <person name="Hume D.A."/>
            <person name="Kai C."/>
            <person name="Sasaki D."/>
            <person name="Tomaru Y."/>
            <person name="Fukuda S."/>
            <person name="Kanamori-Katayama M."/>
            <person name="Suzuki M."/>
            <person name="Aoki J."/>
            <person name="Arakawa T."/>
            <person name="Iida J."/>
            <person name="Imamura K."/>
            <person name="Itoh M."/>
            <person name="Kato T."/>
            <person name="Kawaji H."/>
            <person name="Kawagashira N."/>
            <person name="Kawashima T."/>
            <person name="Kojima M."/>
            <person name="Kondo S."/>
            <person name="Konno H."/>
            <person name="Nakano K."/>
            <person name="Ninomiya N."/>
            <person name="Nishio T."/>
            <person name="Okada M."/>
            <person name="Plessy C."/>
            <person name="Shibata K."/>
            <person name="Shiraki T."/>
            <person name="Suzuki S."/>
            <person name="Tagami M."/>
            <person name="Waki K."/>
            <person name="Watahiki A."/>
            <person name="Okamura-Oho Y."/>
            <person name="Suzuki H."/>
            <person name="Kawai J."/>
            <person name="Hayashizaki Y."/>
        </authorList>
    </citation>
    <scope>NUCLEOTIDE SEQUENCE [LARGE SCALE MRNA] (ISOFORMS 2 AND 3)</scope>
    <source>
        <strain>C57BL/6J</strain>
        <strain>NOD</strain>
        <tissue>Spleen</tissue>
    </source>
</reference>
<reference key="4">
    <citation type="journal article" date="2004" name="Genome Res.">
        <title>The status, quality, and expansion of the NIH full-length cDNA project: the Mammalian Gene Collection (MGC).</title>
        <authorList>
            <consortium name="The MGC Project Team"/>
        </authorList>
    </citation>
    <scope>NUCLEOTIDE SEQUENCE [LARGE SCALE MRNA] (ISOFORMS 1 AND 2)</scope>
    <source>
        <strain>129</strain>
        <strain>FVB/N</strain>
        <strain>FVB/N-3</strain>
        <tissue>Mammary tumor</tissue>
        <tissue>Salivary gland</tissue>
    </source>
</reference>
<reference key="5">
    <citation type="submission" date="2007-04" db="UniProtKB">
        <authorList>
            <person name="Lubec G."/>
            <person name="Klug S."/>
            <person name="Kang S.U."/>
        </authorList>
    </citation>
    <scope>PROTEIN SEQUENCE OF 98-108 AND 286-305</scope>
    <scope>IDENTIFICATION BY MASS SPECTROMETRY</scope>
    <source>
        <strain>C57BL/6J</strain>
        <tissue>Brain</tissue>
        <tissue>Hippocampus</tissue>
    </source>
</reference>
<reference key="6">
    <citation type="journal article" date="2001" name="J. Biol. Chem.">
        <title>Association of COOH-terminal-binding protein (CtBP) and MEF2-interacting transcription repressor (MITR) contributes to transcriptional repression of the MEF2 transcription factor.</title>
        <authorList>
            <person name="Zhang C.L."/>
            <person name="McKinsey T.A."/>
            <person name="Lu J.R."/>
            <person name="Olson E.N."/>
        </authorList>
    </citation>
    <scope>INTERACTION WITH HDAC4; HDAC5 AND HDAC9</scope>
</reference>
<reference key="7">
    <citation type="journal article" date="2003" name="Cell">
        <title>Homeodomain interacting protein kinase 2 promotes apoptosis by downregulating the transcriptional corepressor CtBP.</title>
        <authorList>
            <person name="Zhang Q."/>
            <person name="Yoshimatsu Y."/>
            <person name="Hildebrand J."/>
            <person name="Frisch S.M."/>
            <person name="Goodman R.H."/>
        </authorList>
    </citation>
    <scope>INTERACTION WITH HIPK2</scope>
</reference>
<reference key="8">
    <citation type="journal article" date="2004" name="J. Biol. Chem.">
        <title>Characterization of four autonomous repression domains in the corepressor receptor interacting protein 140.</title>
        <authorList>
            <person name="Christian M."/>
            <person name="Tullet J.M.A."/>
            <person name="Parker M.G."/>
        </authorList>
    </citation>
    <scope>INTERACTION WITH NRIP1</scope>
</reference>
<reference key="9">
    <citation type="journal article" date="2004" name="Mol. Cell. Biol.">
        <title>Transcriptional and DNA binding activity of the Foxp1/2/4 family is modulated by heterotypic and homotypic protein interactions.</title>
        <authorList>
            <person name="Li S."/>
            <person name="Weidenfeld J."/>
            <person name="Morrisey E.E."/>
        </authorList>
    </citation>
    <scope>INTERACTION WITH FOXP1 AND FOXP2</scope>
</reference>
<reference key="10">
    <citation type="journal article" date="2005" name="Nucleic Acids Res.">
        <title>Kruppel-like zinc finger protein Gli-similar 2 (Glis2) represses transcription through interaction with C-terminal binding protein 1 (CtBP1).</title>
        <authorList>
            <person name="Kim S.-C."/>
            <person name="Kim Y.-S."/>
            <person name="Jetten A.M."/>
        </authorList>
    </citation>
    <scope>INTERACTION WITH GLIS2</scope>
    <scope>FUNCTION</scope>
    <scope>SUBCELLULAR LOCATION</scope>
</reference>
<reference key="11">
    <citation type="journal article" date="2006" name="J. Biol. Chem.">
        <title>Zinc finger protein Wiz links G9a/GLP histone methyltransferases to the co-repressor molecule CtBP.</title>
        <authorList>
            <person name="Ueda J."/>
            <person name="Tachibana M."/>
            <person name="Ikura T."/>
            <person name="Shinkai Y."/>
        </authorList>
    </citation>
    <scope>INTERACTION WITH WIZ</scope>
</reference>
<reference key="12">
    <citation type="journal article" date="2008" name="Genes Dev.">
        <title>Regulation of the brown and white fat gene programs through a PRDM16/CtBP transcriptional complex.</title>
        <authorList>
            <person name="Kajimura S."/>
            <person name="Seale P."/>
            <person name="Tomaru T."/>
            <person name="Erdjument-Bromage H."/>
            <person name="Cooper M.P."/>
            <person name="Ruas J.L."/>
            <person name="Chin S."/>
            <person name="Tempst P."/>
            <person name="Lazar M.A."/>
            <person name="Spiegelman B.M."/>
        </authorList>
    </citation>
    <scope>FUNCTION</scope>
    <scope>INTERACTION WITH PRDM16</scope>
    <scope>SUBCELLULAR LOCATION</scope>
</reference>
<reference key="13">
    <citation type="journal article" date="2009" name="Mol. Cell. Biol.">
        <title>Acetylation-dependent interaction of SATB1 and CtBP1 mediates transcriptional repression by SATB1.</title>
        <authorList>
            <person name="Purbey P.K."/>
            <person name="Singh S."/>
            <person name="Notani D."/>
            <person name="Kumar P.P."/>
            <person name="Limaye A.S."/>
            <person name="Galande S."/>
        </authorList>
    </citation>
    <scope>FUNCTION</scope>
    <scope>INTERACTION WITH SATB1</scope>
</reference>
<reference key="14">
    <citation type="journal article" date="2009" name="Science">
        <title>Eos mediates Foxp3-dependent gene silencing in CD4+ regulatory T cells.</title>
        <authorList>
            <person name="Pan F."/>
            <person name="Yu H."/>
            <person name="Dang E.V."/>
            <person name="Barbi J."/>
            <person name="Pan X."/>
            <person name="Grosso J.F."/>
            <person name="Jinasena D."/>
            <person name="Sharma S.M."/>
            <person name="McCadden E.M."/>
            <person name="Getnet D."/>
            <person name="Drake C.G."/>
            <person name="Liu J.O."/>
            <person name="Ostrowski M.C."/>
            <person name="Pardoll D.M."/>
        </authorList>
    </citation>
    <scope>INTERACTION WITH IKZF4</scope>
</reference>
<reference key="15">
    <citation type="journal article" date="2010" name="Cell">
        <title>A tissue-specific atlas of mouse protein phosphorylation and expression.</title>
        <authorList>
            <person name="Huttlin E.L."/>
            <person name="Jedrychowski M.P."/>
            <person name="Elias J.E."/>
            <person name="Goswami T."/>
            <person name="Rad R."/>
            <person name="Beausoleil S.A."/>
            <person name="Villen J."/>
            <person name="Haas W."/>
            <person name="Sowa M.E."/>
            <person name="Gygi S.P."/>
        </authorList>
    </citation>
    <scope>IDENTIFICATION BY MASS SPECTROMETRY [LARGE SCALE ANALYSIS]</scope>
    <source>
        <tissue>Brain</tissue>
        <tissue>Brown adipose tissue</tissue>
        <tissue>Heart</tissue>
        <tissue>Kidney</tissue>
        <tissue>Liver</tissue>
        <tissue>Lung</tissue>
        <tissue>Pancreas</tissue>
        <tissue>Spleen</tissue>
        <tissue>Testis</tissue>
    </source>
</reference>